<feature type="chain" id="PRO_1000026087" description="ATP-dependent Clp protease proteolytic subunit">
    <location>
        <begin position="1"/>
        <end position="194"/>
    </location>
</feature>
<feature type="active site" description="Nucleophile" evidence="1">
    <location>
        <position position="98"/>
    </location>
</feature>
<feature type="active site" evidence="1">
    <location>
        <position position="123"/>
    </location>
</feature>
<organism>
    <name type="scientific">Acetivibrio thermocellus (strain ATCC 27405 / DSM 1237 / JCM 9322 / NBRC 103400 / NCIMB 10682 / NRRL B-4536 / VPI 7372)</name>
    <name type="common">Clostridium thermocellum</name>
    <dbReference type="NCBI Taxonomy" id="203119"/>
    <lineage>
        <taxon>Bacteria</taxon>
        <taxon>Bacillati</taxon>
        <taxon>Bacillota</taxon>
        <taxon>Clostridia</taxon>
        <taxon>Eubacteriales</taxon>
        <taxon>Oscillospiraceae</taxon>
        <taxon>Acetivibrio</taxon>
    </lineage>
</organism>
<protein>
    <recommendedName>
        <fullName evidence="1">ATP-dependent Clp protease proteolytic subunit</fullName>
        <ecNumber evidence="1">3.4.21.92</ecNumber>
    </recommendedName>
    <alternativeName>
        <fullName evidence="1">Endopeptidase Clp</fullName>
    </alternativeName>
</protein>
<comment type="function">
    <text evidence="1">Cleaves peptides in various proteins in a process that requires ATP hydrolysis. Has a chymotrypsin-like activity. Plays a major role in the degradation of misfolded proteins.</text>
</comment>
<comment type="catalytic activity">
    <reaction evidence="1">
        <text>Hydrolysis of proteins to small peptides in the presence of ATP and magnesium. alpha-casein is the usual test substrate. In the absence of ATP, only oligopeptides shorter than five residues are hydrolyzed (such as succinyl-Leu-Tyr-|-NHMec, and Leu-Tyr-Leu-|-Tyr-Trp, in which cleavage of the -Tyr-|-Leu- and -Tyr-|-Trp bonds also occurs).</text>
        <dbReference type="EC" id="3.4.21.92"/>
    </reaction>
</comment>
<comment type="subunit">
    <text evidence="1">Fourteen ClpP subunits assemble into 2 heptameric rings which stack back to back to give a disk-like structure with a central cavity, resembling the structure of eukaryotic proteasomes.</text>
</comment>
<comment type="subcellular location">
    <subcellularLocation>
        <location evidence="1">Cytoplasm</location>
    </subcellularLocation>
</comment>
<comment type="similarity">
    <text evidence="1">Belongs to the peptidase S14 family.</text>
</comment>
<gene>
    <name evidence="1" type="primary">clpP</name>
    <name type="ordered locus">Cthe_2740</name>
</gene>
<sequence length="194" mass="21601">MSLVPIVVEQTNRGERSYDIYSRLLKDRIIVLSDEINDVTASLVVAQMLFLEAEDPDKDIQLYINSPGGSVTAGFAIYDTMQYVKPDVSTICIGMAASMGAFLLAAGAKGKRFALPNSEIMIHQPLGGARGQATDIKIHAEQIIKIKNKLNRILSERTGQPFEKIERDTERDFFMSAEEAKAYGIVDEVMERRK</sequence>
<keyword id="KW-0963">Cytoplasm</keyword>
<keyword id="KW-0378">Hydrolase</keyword>
<keyword id="KW-0645">Protease</keyword>
<keyword id="KW-1185">Reference proteome</keyword>
<keyword id="KW-0720">Serine protease</keyword>
<reference key="1">
    <citation type="submission" date="2007-02" db="EMBL/GenBank/DDBJ databases">
        <title>Complete sequence of Clostridium thermocellum ATCC 27405.</title>
        <authorList>
            <consortium name="US DOE Joint Genome Institute"/>
            <person name="Copeland A."/>
            <person name="Lucas S."/>
            <person name="Lapidus A."/>
            <person name="Barry K."/>
            <person name="Detter J.C."/>
            <person name="Glavina del Rio T."/>
            <person name="Hammon N."/>
            <person name="Israni S."/>
            <person name="Dalin E."/>
            <person name="Tice H."/>
            <person name="Pitluck S."/>
            <person name="Chertkov O."/>
            <person name="Brettin T."/>
            <person name="Bruce D."/>
            <person name="Han C."/>
            <person name="Tapia R."/>
            <person name="Gilna P."/>
            <person name="Schmutz J."/>
            <person name="Larimer F."/>
            <person name="Land M."/>
            <person name="Hauser L."/>
            <person name="Kyrpides N."/>
            <person name="Mikhailova N."/>
            <person name="Wu J.H.D."/>
            <person name="Newcomb M."/>
            <person name="Richardson P."/>
        </authorList>
    </citation>
    <scope>NUCLEOTIDE SEQUENCE [LARGE SCALE GENOMIC DNA]</scope>
    <source>
        <strain>ATCC 27405 / DSM 1237 / JCM 9322 / NBRC 103400 / NCIMB 10682 / NRRL B-4536 / VPI 7372</strain>
    </source>
</reference>
<name>CLPP_ACET2</name>
<accession>A3DJ10</accession>
<evidence type="ECO:0000255" key="1">
    <source>
        <dbReference type="HAMAP-Rule" id="MF_00444"/>
    </source>
</evidence>
<dbReference type="EC" id="3.4.21.92" evidence="1"/>
<dbReference type="EMBL" id="CP000568">
    <property type="protein sequence ID" value="ABN53939.1"/>
    <property type="molecule type" value="Genomic_DNA"/>
</dbReference>
<dbReference type="RefSeq" id="WP_003514324.1">
    <property type="nucleotide sequence ID" value="NC_009012.1"/>
</dbReference>
<dbReference type="SMR" id="A3DJ10"/>
<dbReference type="STRING" id="203119.Cthe_2740"/>
<dbReference type="MEROPS" id="S14.001"/>
<dbReference type="GeneID" id="35805535"/>
<dbReference type="KEGG" id="cth:Cthe_2740"/>
<dbReference type="eggNOG" id="COG0740">
    <property type="taxonomic scope" value="Bacteria"/>
</dbReference>
<dbReference type="HOGENOM" id="CLU_058707_3_2_9"/>
<dbReference type="OrthoDB" id="9802800at2"/>
<dbReference type="Proteomes" id="UP000002145">
    <property type="component" value="Chromosome"/>
</dbReference>
<dbReference type="GO" id="GO:0005737">
    <property type="term" value="C:cytoplasm"/>
    <property type="evidence" value="ECO:0007669"/>
    <property type="project" value="UniProtKB-SubCell"/>
</dbReference>
<dbReference type="GO" id="GO:0009368">
    <property type="term" value="C:endopeptidase Clp complex"/>
    <property type="evidence" value="ECO:0007669"/>
    <property type="project" value="TreeGrafter"/>
</dbReference>
<dbReference type="GO" id="GO:0004176">
    <property type="term" value="F:ATP-dependent peptidase activity"/>
    <property type="evidence" value="ECO:0007669"/>
    <property type="project" value="InterPro"/>
</dbReference>
<dbReference type="GO" id="GO:0051117">
    <property type="term" value="F:ATPase binding"/>
    <property type="evidence" value="ECO:0007669"/>
    <property type="project" value="TreeGrafter"/>
</dbReference>
<dbReference type="GO" id="GO:0004252">
    <property type="term" value="F:serine-type endopeptidase activity"/>
    <property type="evidence" value="ECO:0007669"/>
    <property type="project" value="UniProtKB-UniRule"/>
</dbReference>
<dbReference type="GO" id="GO:0006515">
    <property type="term" value="P:protein quality control for misfolded or incompletely synthesized proteins"/>
    <property type="evidence" value="ECO:0007669"/>
    <property type="project" value="TreeGrafter"/>
</dbReference>
<dbReference type="CDD" id="cd07017">
    <property type="entry name" value="S14_ClpP_2"/>
    <property type="match status" value="1"/>
</dbReference>
<dbReference type="FunFam" id="3.90.226.10:FF:000001">
    <property type="entry name" value="ATP-dependent Clp protease proteolytic subunit"/>
    <property type="match status" value="1"/>
</dbReference>
<dbReference type="Gene3D" id="3.90.226.10">
    <property type="entry name" value="2-enoyl-CoA Hydratase, Chain A, domain 1"/>
    <property type="match status" value="1"/>
</dbReference>
<dbReference type="HAMAP" id="MF_00444">
    <property type="entry name" value="ClpP"/>
    <property type="match status" value="1"/>
</dbReference>
<dbReference type="InterPro" id="IPR001907">
    <property type="entry name" value="ClpP"/>
</dbReference>
<dbReference type="InterPro" id="IPR029045">
    <property type="entry name" value="ClpP/crotonase-like_dom_sf"/>
</dbReference>
<dbReference type="InterPro" id="IPR023562">
    <property type="entry name" value="ClpP/TepA"/>
</dbReference>
<dbReference type="InterPro" id="IPR033135">
    <property type="entry name" value="ClpP_His_AS"/>
</dbReference>
<dbReference type="InterPro" id="IPR018215">
    <property type="entry name" value="ClpP_Ser_AS"/>
</dbReference>
<dbReference type="NCBIfam" id="TIGR00493">
    <property type="entry name" value="clpP"/>
    <property type="match status" value="1"/>
</dbReference>
<dbReference type="NCBIfam" id="NF001368">
    <property type="entry name" value="PRK00277.1"/>
    <property type="match status" value="1"/>
</dbReference>
<dbReference type="NCBIfam" id="NF009205">
    <property type="entry name" value="PRK12553.1"/>
    <property type="match status" value="1"/>
</dbReference>
<dbReference type="PANTHER" id="PTHR10381">
    <property type="entry name" value="ATP-DEPENDENT CLP PROTEASE PROTEOLYTIC SUBUNIT"/>
    <property type="match status" value="1"/>
</dbReference>
<dbReference type="PANTHER" id="PTHR10381:SF70">
    <property type="entry name" value="ATP-DEPENDENT CLP PROTEASE PROTEOLYTIC SUBUNIT"/>
    <property type="match status" value="1"/>
</dbReference>
<dbReference type="Pfam" id="PF00574">
    <property type="entry name" value="CLP_protease"/>
    <property type="match status" value="1"/>
</dbReference>
<dbReference type="PRINTS" id="PR00127">
    <property type="entry name" value="CLPPROTEASEP"/>
</dbReference>
<dbReference type="SUPFAM" id="SSF52096">
    <property type="entry name" value="ClpP/crotonase"/>
    <property type="match status" value="1"/>
</dbReference>
<dbReference type="PROSITE" id="PS00382">
    <property type="entry name" value="CLP_PROTEASE_HIS"/>
    <property type="match status" value="1"/>
</dbReference>
<dbReference type="PROSITE" id="PS00381">
    <property type="entry name" value="CLP_PROTEASE_SER"/>
    <property type="match status" value="1"/>
</dbReference>
<proteinExistence type="inferred from homology"/>